<name>Y4762_MYCUA</name>
<evidence type="ECO:0000250" key="1"/>
<evidence type="ECO:0000305" key="2"/>
<gene>
    <name type="ordered locus">MUL_4762</name>
</gene>
<keyword id="KW-0489">Methyltransferase</keyword>
<keyword id="KW-0949">S-adenosyl-L-methionine</keyword>
<keyword id="KW-0808">Transferase</keyword>
<protein>
    <recommendedName>
        <fullName>Putative S-adenosyl-L-methionine-dependent methyltransferase MUL_4762</fullName>
        <ecNumber>2.1.1.-</ecNumber>
    </recommendedName>
</protein>
<proteinExistence type="inferred from homology"/>
<dbReference type="EC" id="2.1.1.-"/>
<dbReference type="EMBL" id="CP000325">
    <property type="protein sequence ID" value="ABL06682.1"/>
    <property type="molecule type" value="Genomic_DNA"/>
</dbReference>
<dbReference type="RefSeq" id="WP_011742274.1">
    <property type="nucleotide sequence ID" value="NC_008611.1"/>
</dbReference>
<dbReference type="SMR" id="A0PWG3"/>
<dbReference type="KEGG" id="mul:MUL_4762"/>
<dbReference type="eggNOG" id="COG3315">
    <property type="taxonomic scope" value="Bacteria"/>
</dbReference>
<dbReference type="HOGENOM" id="CLU_056160_2_1_11"/>
<dbReference type="Proteomes" id="UP000000765">
    <property type="component" value="Chromosome"/>
</dbReference>
<dbReference type="GO" id="GO:0008168">
    <property type="term" value="F:methyltransferase activity"/>
    <property type="evidence" value="ECO:0007669"/>
    <property type="project" value="UniProtKB-KW"/>
</dbReference>
<dbReference type="GO" id="GO:0032259">
    <property type="term" value="P:methylation"/>
    <property type="evidence" value="ECO:0007669"/>
    <property type="project" value="UniProtKB-KW"/>
</dbReference>
<dbReference type="FunFam" id="3.40.50.150:FF:000152">
    <property type="entry name" value="S-adenosyl-L-methionine-dependent methyltransferase"/>
    <property type="match status" value="1"/>
</dbReference>
<dbReference type="Gene3D" id="3.40.50.150">
    <property type="entry name" value="Vaccinia Virus protein VP39"/>
    <property type="match status" value="1"/>
</dbReference>
<dbReference type="InterPro" id="IPR007213">
    <property type="entry name" value="Ppm1/Ppm2/Tcmp"/>
</dbReference>
<dbReference type="InterPro" id="IPR029063">
    <property type="entry name" value="SAM-dependent_MTases_sf"/>
</dbReference>
<dbReference type="InterPro" id="IPR011610">
    <property type="entry name" value="SAM_mthyl_Trfase_ML2640-like"/>
</dbReference>
<dbReference type="NCBIfam" id="TIGR00027">
    <property type="entry name" value="mthyl_TIGR00027"/>
    <property type="match status" value="1"/>
</dbReference>
<dbReference type="PANTHER" id="PTHR43619">
    <property type="entry name" value="S-ADENOSYL-L-METHIONINE-DEPENDENT METHYLTRANSFERASE YKTD-RELATED"/>
    <property type="match status" value="1"/>
</dbReference>
<dbReference type="PANTHER" id="PTHR43619:SF2">
    <property type="entry name" value="S-ADENOSYL-L-METHIONINE-DEPENDENT METHYLTRANSFERASES SUPERFAMILY PROTEIN"/>
    <property type="match status" value="1"/>
</dbReference>
<dbReference type="Pfam" id="PF04072">
    <property type="entry name" value="LCM"/>
    <property type="match status" value="1"/>
</dbReference>
<dbReference type="SUPFAM" id="SSF53335">
    <property type="entry name" value="S-adenosyl-L-methionine-dependent methyltransferases"/>
    <property type="match status" value="1"/>
</dbReference>
<reference key="1">
    <citation type="journal article" date="2007" name="Genome Res.">
        <title>Reductive evolution and niche adaptation inferred from the genome of Mycobacterium ulcerans, the causative agent of Buruli ulcer.</title>
        <authorList>
            <person name="Stinear T.P."/>
            <person name="Seemann T."/>
            <person name="Pidot S."/>
            <person name="Frigui W."/>
            <person name="Reysset G."/>
            <person name="Garnier T."/>
            <person name="Meurice G."/>
            <person name="Simon D."/>
            <person name="Bouchier C."/>
            <person name="Ma L."/>
            <person name="Tichit M."/>
            <person name="Porter J.L."/>
            <person name="Ryan J."/>
            <person name="Johnson P.D.R."/>
            <person name="Davies J.K."/>
            <person name="Jenkin G.A."/>
            <person name="Small P.L.C."/>
            <person name="Jones L.M."/>
            <person name="Tekaia F."/>
            <person name="Laval F."/>
            <person name="Daffe M."/>
            <person name="Parkhill J."/>
            <person name="Cole S.T."/>
        </authorList>
    </citation>
    <scope>NUCLEOTIDE SEQUENCE [LARGE SCALE GENOMIC DNA]</scope>
    <source>
        <strain>Agy99</strain>
    </source>
</reference>
<sequence length="310" mass="34535">MRTHDDTWDIRTSVGATAVMVAAARAVETSKPEPLIRDPYARMLVTNANAGVIWEAMLDQEMVAKVEAIDAETAATVEHMRSYQAVRTNFFDTYFADAVAAGIRQVVILASGLDSRAYRLDWPAGTTVYEIDQPQVLAYKSATLAENGVTPAAERREVAIDLRQDWPSALRAAGFDPSARTAWLAEGLLMYLPAEAQDRLFTQIGELSCAGSRIAAETAGNHADERREQMRERFRKVAQTLGLEQTIDVHELIYHDPDRAPLGQWLNEHGWRANAQNACDEMHRVGRWVEGVPMADDKQAYSDFVTAERL</sequence>
<organism>
    <name type="scientific">Mycobacterium ulcerans (strain Agy99)</name>
    <dbReference type="NCBI Taxonomy" id="362242"/>
    <lineage>
        <taxon>Bacteria</taxon>
        <taxon>Bacillati</taxon>
        <taxon>Actinomycetota</taxon>
        <taxon>Actinomycetes</taxon>
        <taxon>Mycobacteriales</taxon>
        <taxon>Mycobacteriaceae</taxon>
        <taxon>Mycobacterium</taxon>
        <taxon>Mycobacterium ulcerans group</taxon>
    </lineage>
</organism>
<feature type="chain" id="PRO_0000361251" description="Putative S-adenosyl-L-methionine-dependent methyltransferase MUL_4762">
    <location>
        <begin position="1"/>
        <end position="310"/>
    </location>
</feature>
<feature type="binding site" evidence="1">
    <location>
        <position position="132"/>
    </location>
    <ligand>
        <name>S-adenosyl-L-methionine</name>
        <dbReference type="ChEBI" id="CHEBI:59789"/>
    </ligand>
</feature>
<feature type="binding site" evidence="1">
    <location>
        <begin position="161"/>
        <end position="162"/>
    </location>
    <ligand>
        <name>S-adenosyl-L-methionine</name>
        <dbReference type="ChEBI" id="CHEBI:59789"/>
    </ligand>
</feature>
<accession>A0PWG3</accession>
<comment type="function">
    <text evidence="1">Exhibits S-adenosyl-L-methionine-dependent methyltransferase activity.</text>
</comment>
<comment type="similarity">
    <text evidence="2">Belongs to the UPF0677 family.</text>
</comment>